<keyword id="KW-0963">Cytoplasm</keyword>
<keyword id="KW-0560">Oxidoreductase</keyword>
<proteinExistence type="inferred from homology"/>
<gene>
    <name evidence="1" type="primary">cysH</name>
    <name type="ordered locus">SeHA_C3141</name>
</gene>
<reference key="1">
    <citation type="journal article" date="2011" name="J. Bacteriol.">
        <title>Comparative genomics of 28 Salmonella enterica isolates: evidence for CRISPR-mediated adaptive sublineage evolution.</title>
        <authorList>
            <person name="Fricke W.F."/>
            <person name="Mammel M.K."/>
            <person name="McDermott P.F."/>
            <person name="Tartera C."/>
            <person name="White D.G."/>
            <person name="Leclerc J.E."/>
            <person name="Ravel J."/>
            <person name="Cebula T.A."/>
        </authorList>
    </citation>
    <scope>NUCLEOTIDE SEQUENCE [LARGE SCALE GENOMIC DNA]</scope>
    <source>
        <strain>SL476</strain>
    </source>
</reference>
<accession>B4TFY3</accession>
<protein>
    <recommendedName>
        <fullName evidence="1">Phosphoadenosine 5'-phosphosulfate reductase</fullName>
        <shortName evidence="1">PAPS reductase</shortName>
        <ecNumber evidence="1">1.8.4.8</ecNumber>
    </recommendedName>
    <alternativeName>
        <fullName evidence="1">3'-phosphoadenylylsulfate reductase</fullName>
    </alternativeName>
    <alternativeName>
        <fullName evidence="1">PAPS reductase, thioredoxin dependent</fullName>
    </alternativeName>
    <alternativeName>
        <fullName evidence="1">PAPS sulfotransferase</fullName>
    </alternativeName>
    <alternativeName>
        <fullName evidence="1">PAdoPS reductase</fullName>
    </alternativeName>
</protein>
<feature type="chain" id="PRO_1000092183" description="Phosphoadenosine 5'-phosphosulfate reductase">
    <location>
        <begin position="1"/>
        <end position="244"/>
    </location>
</feature>
<feature type="active site" description="Nucleophile; cysteine thiosulfonate intermediate" evidence="1">
    <location>
        <position position="239"/>
    </location>
</feature>
<name>CYSH_SALHS</name>
<sequence>MSQLDLNALNELPKVDRVLALAETNAQLETLTAEERVAWALENLPGEYVLSSSFGIQAAVSLHLVNQIRPDIPVILTDTGYLFPETYQFIDELTDKLKLNLKVYRAGESPAWQEARYGKLWEQGVEGIEKYNEINKVEPMNRALKELKAQTWFAGLRREQSGSRAHLPVLAIQRGVFKVLPIIDWDNRTVYQYLQKHGLKYHPLWDQGYLSVGDTHTTRKWEPGMAEEETRFFGLKRECGLHEG</sequence>
<dbReference type="EC" id="1.8.4.8" evidence="1"/>
<dbReference type="EMBL" id="CP001120">
    <property type="protein sequence ID" value="ACF70462.1"/>
    <property type="molecule type" value="Genomic_DNA"/>
</dbReference>
<dbReference type="RefSeq" id="WP_000080390.1">
    <property type="nucleotide sequence ID" value="NC_011083.1"/>
</dbReference>
<dbReference type="SMR" id="B4TFY3"/>
<dbReference type="KEGG" id="seh:SeHA_C3141"/>
<dbReference type="HOGENOM" id="CLU_044089_3_0_6"/>
<dbReference type="UniPathway" id="UPA00140">
    <property type="reaction ID" value="UER00206"/>
</dbReference>
<dbReference type="Proteomes" id="UP000001866">
    <property type="component" value="Chromosome"/>
</dbReference>
<dbReference type="GO" id="GO:0005737">
    <property type="term" value="C:cytoplasm"/>
    <property type="evidence" value="ECO:0007669"/>
    <property type="project" value="UniProtKB-SubCell"/>
</dbReference>
<dbReference type="GO" id="GO:0004604">
    <property type="term" value="F:phosphoadenylyl-sulfate reductase (thioredoxin) activity"/>
    <property type="evidence" value="ECO:0007669"/>
    <property type="project" value="UniProtKB-UniRule"/>
</dbReference>
<dbReference type="GO" id="GO:0070814">
    <property type="term" value="P:hydrogen sulfide biosynthetic process"/>
    <property type="evidence" value="ECO:0007669"/>
    <property type="project" value="UniProtKB-UniRule"/>
</dbReference>
<dbReference type="GO" id="GO:0019379">
    <property type="term" value="P:sulfate assimilation, phosphoadenylyl sulfate reduction by phosphoadenylyl-sulfate reductase (thioredoxin)"/>
    <property type="evidence" value="ECO:0007669"/>
    <property type="project" value="UniProtKB-UniRule"/>
</dbReference>
<dbReference type="CDD" id="cd23945">
    <property type="entry name" value="PAPS_reductase"/>
    <property type="match status" value="1"/>
</dbReference>
<dbReference type="FunFam" id="3.40.50.620:FF:000043">
    <property type="entry name" value="Phosphoadenosine phosphosulfate reductase"/>
    <property type="match status" value="1"/>
</dbReference>
<dbReference type="Gene3D" id="3.40.50.620">
    <property type="entry name" value="HUPs"/>
    <property type="match status" value="1"/>
</dbReference>
<dbReference type="HAMAP" id="MF_00063">
    <property type="entry name" value="CysH"/>
    <property type="match status" value="1"/>
</dbReference>
<dbReference type="InterPro" id="IPR004511">
    <property type="entry name" value="PAPS/APS_Rdtase"/>
</dbReference>
<dbReference type="InterPro" id="IPR002500">
    <property type="entry name" value="PAPS_reduct_dom"/>
</dbReference>
<dbReference type="InterPro" id="IPR011800">
    <property type="entry name" value="PAPS_reductase_CysH"/>
</dbReference>
<dbReference type="InterPro" id="IPR014729">
    <property type="entry name" value="Rossmann-like_a/b/a_fold"/>
</dbReference>
<dbReference type="NCBIfam" id="TIGR00434">
    <property type="entry name" value="cysH"/>
    <property type="match status" value="1"/>
</dbReference>
<dbReference type="NCBIfam" id="TIGR02057">
    <property type="entry name" value="PAPS_reductase"/>
    <property type="match status" value="1"/>
</dbReference>
<dbReference type="NCBIfam" id="NF002537">
    <property type="entry name" value="PRK02090.1"/>
    <property type="match status" value="1"/>
</dbReference>
<dbReference type="PANTHER" id="PTHR46509">
    <property type="entry name" value="PHOSPHOADENOSINE PHOSPHOSULFATE REDUCTASE"/>
    <property type="match status" value="1"/>
</dbReference>
<dbReference type="PANTHER" id="PTHR46509:SF1">
    <property type="entry name" value="PHOSPHOADENOSINE PHOSPHOSULFATE REDUCTASE"/>
    <property type="match status" value="1"/>
</dbReference>
<dbReference type="Pfam" id="PF01507">
    <property type="entry name" value="PAPS_reduct"/>
    <property type="match status" value="1"/>
</dbReference>
<dbReference type="PIRSF" id="PIRSF000857">
    <property type="entry name" value="PAPS_reductase"/>
    <property type="match status" value="1"/>
</dbReference>
<dbReference type="SUPFAM" id="SSF52402">
    <property type="entry name" value="Adenine nucleotide alpha hydrolases-like"/>
    <property type="match status" value="1"/>
</dbReference>
<evidence type="ECO:0000255" key="1">
    <source>
        <dbReference type="HAMAP-Rule" id="MF_00063"/>
    </source>
</evidence>
<organism>
    <name type="scientific">Salmonella heidelberg (strain SL476)</name>
    <dbReference type="NCBI Taxonomy" id="454169"/>
    <lineage>
        <taxon>Bacteria</taxon>
        <taxon>Pseudomonadati</taxon>
        <taxon>Pseudomonadota</taxon>
        <taxon>Gammaproteobacteria</taxon>
        <taxon>Enterobacterales</taxon>
        <taxon>Enterobacteriaceae</taxon>
        <taxon>Salmonella</taxon>
    </lineage>
</organism>
<comment type="function">
    <text evidence="1">Catalyzes the formation of sulfite from phosphoadenosine 5'-phosphosulfate (PAPS) using thioredoxin as an electron donor.</text>
</comment>
<comment type="catalytic activity">
    <reaction evidence="1">
        <text>[thioredoxin]-disulfide + sulfite + adenosine 3',5'-bisphosphate + 2 H(+) = [thioredoxin]-dithiol + 3'-phosphoadenylyl sulfate</text>
        <dbReference type="Rhea" id="RHEA:11724"/>
        <dbReference type="Rhea" id="RHEA-COMP:10698"/>
        <dbReference type="Rhea" id="RHEA-COMP:10700"/>
        <dbReference type="ChEBI" id="CHEBI:15378"/>
        <dbReference type="ChEBI" id="CHEBI:17359"/>
        <dbReference type="ChEBI" id="CHEBI:29950"/>
        <dbReference type="ChEBI" id="CHEBI:50058"/>
        <dbReference type="ChEBI" id="CHEBI:58339"/>
        <dbReference type="ChEBI" id="CHEBI:58343"/>
        <dbReference type="EC" id="1.8.4.8"/>
    </reaction>
</comment>
<comment type="pathway">
    <text evidence="1">Sulfur metabolism; hydrogen sulfide biosynthesis; sulfite from sulfate: step 3/3.</text>
</comment>
<comment type="subcellular location">
    <subcellularLocation>
        <location evidence="1">Cytoplasm</location>
    </subcellularLocation>
</comment>
<comment type="similarity">
    <text evidence="1">Belongs to the PAPS reductase family. CysH subfamily.</text>
</comment>